<reference key="1">
    <citation type="journal article" date="2009" name="Proc. Natl. Acad. Sci. U.S.A.">
        <title>The phage abortive infection system, ToxIN, functions as a protein-RNA toxin-antitoxin pair.</title>
        <authorList>
            <person name="Fineran P.C."/>
            <person name="Blower T.R."/>
            <person name="Foulds I.J."/>
            <person name="Humphreys D.P."/>
            <person name="Lilley K.S."/>
            <person name="Salmond G.P."/>
        </authorList>
    </citation>
    <scope>NUCLEOTIDE SEQUENCE [GENOMIC DNA]</scope>
    <scope>FUNCTION</scope>
    <scope>INDUCTION</scope>
    <scope>DISRUPTION PHENOTYPE</scope>
    <scope>EXPRESSION IN E.COLI AND P.ATROSEPTICUM STRAIN 1043</scope>
    <source>
        <strain>SCRI 1039 / ATCC BAA-673</strain>
        <plasmid>pECA1039</plasmid>
    </source>
</reference>
<reference key="2">
    <citation type="journal article" date="2009" name="J. Bacteriol.">
        <title>Mutagenesis and functional characterization of the RNA and protein components of the toxIN abortive infection and toxin-antitoxin locus of Erwinia.</title>
        <authorList>
            <person name="Blower T.R."/>
            <person name="Fineran P.C."/>
            <person name="Johnson M.J."/>
            <person name="Toth I.K."/>
            <person name="Humphreys D.P."/>
            <person name="Salmond G.P."/>
        </authorList>
    </citation>
    <scope>FUNCTION</scope>
    <scope>INDUCTION</scope>
    <scope>MUTAGENESIS OF TYR-10; LYS-20; PHE-35; GLY-37; TYR-47; SER-53; LYS-116 AND GLU-154</scope>
    <scope>EXPRESSION IN E.COLI AND P.ATROSEPTICUM STRAIN 1043</scope>
    <source>
        <strain>SCRI 1039 / ATCC BAA-673</strain>
        <plasmid>pECA1039</plasmid>
    </source>
</reference>
<reference key="3">
    <citation type="journal article" date="2013" name="Proc. Natl. Acad. Sci. U.S.A.">
        <title>Selectivity and self-assembly in the control of a bacterial toxin by an antitoxic noncoding RNA pseudoknot.</title>
        <authorList>
            <person name="Short F.L."/>
            <person name="Pei X.Y."/>
            <person name="Blower T.R."/>
            <person name="Ong S.L."/>
            <person name="Fineran P.C."/>
            <person name="Luisi B.F."/>
            <person name="Salmond G.P."/>
        </authorList>
    </citation>
    <scope>FUNCTION</scope>
    <scope>SUBUNIT</scope>
    <source>
        <strain>SCRI 1039 / ATCC BAA-673</strain>
        <plasmid>pECA1039</plasmid>
    </source>
</reference>
<reference key="4">
    <citation type="journal article" date="2012" name="PLoS Genet.">
        <title>Viral evasion of a bacterial suicide system by RNA-based molecular mimicry enables infectious altruism.</title>
        <authorList>
            <person name="Blower T.R."/>
            <person name="Evans T.J."/>
            <person name="Przybilski R."/>
            <person name="Fineran P.C."/>
            <person name="Salmond G.P."/>
        </authorList>
    </citation>
    <scope>VIRAL ESCAPE MECHANISM</scope>
    <scope>INDUCTION</scope>
    <source>
        <strain>SCRI 1039 / ATCC BAA-673</strain>
        <plasmid>pECA1039</plasmid>
    </source>
</reference>
<reference key="5">
    <citation type="journal article" date="2011" name="Nat. Struct. Mol. Biol.">
        <title>A processed noncoding RNA regulates an altruistic bacterial antiviral system.</title>
        <authorList>
            <person name="Blower T.R."/>
            <person name="Pei X.Y."/>
            <person name="Short F.L."/>
            <person name="Fineran P.C."/>
            <person name="Humphreys D.P."/>
            <person name="Luisi B.F."/>
            <person name="Salmond G.P."/>
        </authorList>
    </citation>
    <scope>X-RAY CRYSTALLOGRAPHY (2.55 ANGSTROMS) IN COMPLEX WITH ANTITOXIN TOXI</scope>
    <scope>SUBUNIT</scope>
    <scope>MUTAGENESIS OF TYR-29; LYS-33; THR-52; SER-53; LYS-55; HIS-58 AND GLN-117</scope>
    <scope>RNA-BINDING</scope>
    <source>
        <strain>SCRI 1039 / ATCC BAA-673</strain>
        <plasmid>pECA1039</plasmid>
    </source>
</reference>
<organism>
    <name type="scientific">Pectobacterium atrosepticum</name>
    <name type="common">Erwinia carotovora subsp. atroseptica</name>
    <dbReference type="NCBI Taxonomy" id="29471"/>
    <lineage>
        <taxon>Bacteria</taxon>
        <taxon>Pseudomonadati</taxon>
        <taxon>Pseudomonadota</taxon>
        <taxon>Gammaproteobacteria</taxon>
        <taxon>Enterobacterales</taxon>
        <taxon>Pectobacteriaceae</taxon>
        <taxon>Pectobacterium</taxon>
    </lineage>
</organism>
<comment type="function">
    <text evidence="1 2 3 5">Toxic component of a type III toxin-antitoxin (TA) system. An endoribonuclease which is active independently of the ribosome, cleaving between the second and third A of AAA(U/G) sequences, although not all occurrences of this tetranucleotide are cleaved (PubMed:23267117). Digests many mRNA species, including its own transcript and its cognate antitoxin RNA ToxI. ToxI has 5.5 nearly identical 36 nucleotide-long repeats (a single repeat neutralizes the toxin in vivo); a single repeat folds into a pseudoknot which binds the toxin (PubMed:21240270). The ToxI precursor RNA is a preferential target in vivo and is progressively degraded to single repeat lengths as ToxN-ToxI complex self-assembly occurs (PubMed:23267117). In vivo expression of ToxI antitoxin inhibits endonuclease activity of ToxN (PubMed:23267117). The toxin alone inhibits growth when expressed in E.coli without causing cell lysis; this bacteriostatic effect is neutralized by cognate RNA antitoxin ToxI (PubMed:19124776, PubMed:23267117). Non-cognate antitoxin RNA from B.thuringiensis does not inhibit this toxin (PubMed:23267117). The RNA antitoxin is less stable than the proteinaceous toxin; synthesis of ToxI in the absence of new ToxN synthesis restores growth and also detectable accumulation of the ToxN protein (PubMed:19124776). Negatively regulates its own operon in complex with ToxI (PubMed:19633081). The toxin-antitoxin system functions in plasmid maintenance (a plasmid addiction system) (PubMed:23267117).</text>
</comment>
<comment type="function">
    <text evidence="1 4">The TA system protects P.atrosepticum strain 1043 against phage phiM1 and phiA2, E.coli against some but not all coliphages and S.marcescens against some bacteriophages, causing an abortive infection (Abi phenotype) (PubMed:19124776). Also protects P.atrosepticum strain 1043 against phage phiTE; phage that escape Abi and grow in this bacterium have evolved a pseudo-ToxI RNA by expanding a pre-existing sequence similar to the bona fide ToxI repeats (PubMed:23109916).</text>
</comment>
<comment type="subunit">
    <text evidence="3 5">One ToxN monomer binds to a 36-nt-long single repeat of the ToxI RNA; this complex forms a triangular heterohexameric complex with ToxN connected by the ToxI RNA to another toxin molecule. The ToxI repeat forms a pseudoknot which occludes the toxin active site. Interaction of ToxI with ToxN partially inhibits the latter's endoribonuclease activity in vitro (PubMed:21240270). The complex self-assembles in vitro with either full-length or processed single repeats; during the process the precursor is processed (PubMed:23267117).</text>
</comment>
<comment type="interaction">
    <interactant intactId="EBI-15904863">
        <id>B8X8Z0</id>
    </interactant>
    <interactant intactId="EBI-15904863">
        <id>B8X8Z0</id>
        <label>toxN</label>
    </interactant>
    <organismsDiffer>false</organismsDiffer>
    <experiments>2</experiments>
</comment>
<comment type="induction">
    <text evidence="1 2 4">Part of the toxIN operon. The operon is repressed by ToxI and ToxN together, but not by ToxI alone (ToxN alone cannot be tested as it is toxic) (PubMed:19633081). About 90% of transcripts terminate after toxI, approximately 10% include toxN (PubMed:19124776). Constitutively expressed in P.atrosepticum strain 1043 in the presence and absence of phage phiTE infection (at protein level) (PubMed:23109916).</text>
</comment>
<comment type="disruption phenotype">
    <text evidence="1">Loss of resistance to phage phiM1 and phiA2.</text>
</comment>
<comment type="similarity">
    <text evidence="8">Belongs to the ToxN/AbiQ toxin family.</text>
</comment>
<proteinExistence type="evidence at protein level"/>
<sequence length="171" mass="19702">MKFYTISSKYIEYLKEFDDKVPNSEDPTYQNPKAFIGIVLEIQGHKYLAPLTSPKKWHNNVKESSLSCFKLHENGVPENQLGLINLKFMIPIIEAEVSLLDLGNMPNTPYKRMLYKQLQFIRANSDKIASKSDTLRNLVLQGKMQGTCNFSLLEEKYRDFGKEAEDTEEGE</sequence>
<feature type="chain" id="PRO_0000432892" description="Endoribonuclease ToxN">
    <location>
        <begin position="1"/>
        <end position="171"/>
    </location>
</feature>
<feature type="mutagenesis site" description="No longer confers phiA2 resistance, not toxic in E.coli." evidence="2">
    <original>Y</original>
    <variation>A</variation>
    <location>
        <position position="10"/>
    </location>
</feature>
<feature type="mutagenesis site" description="Still confers phiA2 resistance, toxic in E.coli." evidence="2">
    <original>K</original>
    <variation>A</variation>
    <location>
        <position position="20"/>
    </location>
</feature>
<feature type="mutagenesis site" description="No longer confers phiA2 resistance, not toxic in E.coli." evidence="2">
    <original>K</original>
    <variation>E</variation>
    <location>
        <position position="20"/>
    </location>
</feature>
<feature type="mutagenesis site" description="No longer confers phiM1 or phiS61 resistance, not toxic in E.coli." evidence="3">
    <original>Y</original>
    <variation>A</variation>
    <location>
        <position position="29"/>
    </location>
</feature>
<feature type="mutagenesis site" description="No longer confers phiM1 or phiS61 resistance, not toxic in E.coli." evidence="3">
    <original>K</original>
    <variation>A</variation>
    <location>
        <position position="33"/>
    </location>
</feature>
<feature type="mutagenesis site" description="No longer confers phiA2 resistance, not toxic in E.coli." evidence="2">
    <original>F</original>
    <variation>A</variation>
    <location>
        <position position="35"/>
    </location>
</feature>
<feature type="mutagenesis site" description="No longer confers phiA2 resistance, not toxic in E.coli." evidence="2">
    <original>G</original>
    <variation>A</variation>
    <location>
        <position position="37"/>
    </location>
</feature>
<feature type="mutagenesis site" description="No longer confers phiA2 resistance, not toxic in E.coli." evidence="2">
    <original>Y</original>
    <variation>A</variation>
    <location>
        <position position="47"/>
    </location>
</feature>
<feature type="mutagenesis site" description="No longer confers phiM1 or phiS61 resistance, not toxic in E.coli." evidence="3">
    <original>T</original>
    <variation>A</variation>
    <location>
        <position position="52"/>
    </location>
</feature>
<feature type="mutagenesis site" description="No longer confers phiA2 resistance, not toxic in E.coli (Ref.2). Alters but does not inhibit RNase site-specificity (Ref.3)." evidence="2 3">
    <original>S</original>
    <variation>A</variation>
    <location>
        <position position="53"/>
    </location>
</feature>
<feature type="mutagenesis site" description="No longer confers phiM1 or phiS61 resistance, not toxic in E.coli." evidence="3">
    <original>K</original>
    <variation>A</variation>
    <location>
        <position position="55"/>
    </location>
</feature>
<feature type="mutagenesis site" description="No longer confers phiM1 or phiS61 resistance, not toxic in E.coli." evidence="3">
    <original>H</original>
    <variation>L</variation>
    <location>
        <position position="58"/>
    </location>
</feature>
<feature type="mutagenesis site" description="Still confers phiA2 resistance, toxic in E.coli." evidence="2">
    <original>S</original>
    <variation>A</variation>
    <location>
        <position position="64"/>
    </location>
</feature>
<feature type="mutagenesis site" description="Still confers phiA2 resistance, toxic in E.coli but colonies are smaller." evidence="2">
    <original>K</original>
    <variation>A</variation>
    <location>
        <position position="87"/>
    </location>
</feature>
<feature type="mutagenesis site" description="Still confers phiM1 or phiS61 resistance, toxic in E.coli." evidence="3">
    <original>Y</original>
    <variation>A</variation>
    <location>
        <position position="115"/>
    </location>
</feature>
<feature type="mutagenesis site" description="No longer confers phiA2 resistance, not toxic in E.coli." evidence="2">
    <original>K</original>
    <variation>A</variation>
    <location>
        <position position="116"/>
    </location>
</feature>
<feature type="mutagenesis site" description="No longer confers phiM1 or phiS61 resistance, not toxic in E.coli." evidence="3">
    <original>Q</original>
    <variation>E</variation>
    <location>
        <position position="117"/>
    </location>
</feature>
<feature type="mutagenesis site" description="Still toxic in E.coli." evidence="3">
    <original>R</original>
    <variation>A</variation>
    <location>
        <position position="122"/>
    </location>
</feature>
<feature type="mutagenesis site" description="Still confers phiA2 resistance, toxic in E.coli." evidence="2">
    <original>G</original>
    <variation>A</variation>
    <location>
        <position position="142"/>
    </location>
</feature>
<feature type="mutagenesis site" description="Still confers phiA2 resistance, toxic in E.coli." evidence="2">
    <original>C</original>
    <variation>A</variation>
    <location>
        <position position="148"/>
    </location>
</feature>
<feature type="mutagenesis site" description="No longer confers phiA2 resistance, not toxic in E.coli." evidence="2">
    <original>E</original>
    <variation>A</variation>
    <location>
        <position position="154"/>
    </location>
</feature>
<feature type="strand" evidence="10">
    <location>
        <begin position="3"/>
        <end position="6"/>
    </location>
</feature>
<feature type="helix" evidence="10">
    <location>
        <begin position="8"/>
        <end position="17"/>
    </location>
</feature>
<feature type="strand" evidence="10">
    <location>
        <begin position="35"/>
        <end position="42"/>
    </location>
</feature>
<feature type="strand" evidence="10">
    <location>
        <begin position="45"/>
        <end position="52"/>
    </location>
</feature>
<feature type="helix" evidence="10">
    <location>
        <begin position="56"/>
        <end position="60"/>
    </location>
</feature>
<feature type="strand" evidence="10">
    <location>
        <begin position="69"/>
        <end position="73"/>
    </location>
</feature>
<feature type="strand" evidence="10">
    <location>
        <begin position="76"/>
        <end position="84"/>
    </location>
</feature>
<feature type="helix" evidence="10">
    <location>
        <begin position="86"/>
        <end position="88"/>
    </location>
</feature>
<feature type="strand" evidence="9">
    <location>
        <begin position="90"/>
        <end position="92"/>
    </location>
</feature>
<feature type="helix" evidence="10">
    <location>
        <begin position="94"/>
        <end position="96"/>
    </location>
</feature>
<feature type="strand" evidence="10">
    <location>
        <begin position="97"/>
        <end position="99"/>
    </location>
</feature>
<feature type="helix" evidence="10">
    <location>
        <begin position="102"/>
        <end position="104"/>
    </location>
</feature>
<feature type="helix" evidence="10">
    <location>
        <begin position="109"/>
        <end position="123"/>
    </location>
</feature>
<feature type="helix" evidence="10">
    <location>
        <begin position="125"/>
        <end position="140"/>
    </location>
</feature>
<feature type="helix" evidence="10">
    <location>
        <begin position="150"/>
        <end position="156"/>
    </location>
</feature>
<feature type="helix" evidence="10">
    <location>
        <begin position="157"/>
        <end position="159"/>
    </location>
</feature>
<accession>B8X8Z0</accession>
<gene>
    <name evidence="6" type="primary">toxN</name>
</gene>
<protein>
    <recommendedName>
        <fullName evidence="7">Endoribonuclease ToxN</fullName>
        <shortName evidence="7">EndoRNase</shortName>
        <ecNumber>3.1.-.-</ecNumber>
    </recommendedName>
    <alternativeName>
        <fullName evidence="6">Toxin ToxN</fullName>
    </alternativeName>
</protein>
<name>TOXN_PECAT</name>
<dbReference type="EC" id="3.1.-.-"/>
<dbReference type="EMBL" id="FJ176937">
    <property type="protein sequence ID" value="ACK87011.1"/>
    <property type="molecule type" value="Genomic_DNA"/>
</dbReference>
<dbReference type="RefSeq" id="WP_012609144.1">
    <property type="nucleotide sequence ID" value="NC_011767.1"/>
</dbReference>
<dbReference type="RefSeq" id="YP_002429170.1">
    <property type="nucleotide sequence ID" value="NC_011767.1"/>
</dbReference>
<dbReference type="PDB" id="2XD0">
    <property type="method" value="X-ray"/>
    <property type="resolution" value="3.00 A"/>
    <property type="chains" value="A/B/E/X/Y/Z=1-171"/>
</dbReference>
<dbReference type="PDB" id="2XDB">
    <property type="method" value="X-ray"/>
    <property type="resolution" value="2.55 A"/>
    <property type="chains" value="A=1-171"/>
</dbReference>
<dbReference type="PDB" id="2XDD">
    <property type="method" value="X-ray"/>
    <property type="resolution" value="3.20 A"/>
    <property type="chains" value="A/B/E=1-171"/>
</dbReference>
<dbReference type="PDBsum" id="2XD0"/>
<dbReference type="PDBsum" id="2XDB"/>
<dbReference type="PDBsum" id="2XDD"/>
<dbReference type="SMR" id="B8X8Z0"/>
<dbReference type="DIP" id="DIP-59074N"/>
<dbReference type="EvolutionaryTrace" id="B8X8Z0"/>
<dbReference type="GO" id="GO:0042802">
    <property type="term" value="F:identical protein binding"/>
    <property type="evidence" value="ECO:0000353"/>
    <property type="project" value="IntAct"/>
</dbReference>
<dbReference type="GO" id="GO:0003723">
    <property type="term" value="F:RNA binding"/>
    <property type="evidence" value="ECO:0000314"/>
    <property type="project" value="UniProtKB"/>
</dbReference>
<dbReference type="GO" id="GO:0004521">
    <property type="term" value="F:RNA endonuclease activity"/>
    <property type="evidence" value="ECO:0000314"/>
    <property type="project" value="UniProtKB"/>
</dbReference>
<dbReference type="GO" id="GO:0051607">
    <property type="term" value="P:defense response to virus"/>
    <property type="evidence" value="ECO:0000314"/>
    <property type="project" value="UniProtKB"/>
</dbReference>
<dbReference type="GO" id="GO:0045892">
    <property type="term" value="P:negative regulation of DNA-templated transcription"/>
    <property type="evidence" value="ECO:0000314"/>
    <property type="project" value="UniProtKB"/>
</dbReference>
<dbReference type="GO" id="GO:0006276">
    <property type="term" value="P:plasmid maintenance"/>
    <property type="evidence" value="ECO:0000315"/>
    <property type="project" value="UniProtKB"/>
</dbReference>
<dbReference type="FunFam" id="3.10.129.130:FF:000001">
    <property type="entry name" value="Endoribonuclease ToxN"/>
    <property type="match status" value="1"/>
</dbReference>
<dbReference type="Gene3D" id="3.10.129.130">
    <property type="match status" value="1"/>
</dbReference>
<dbReference type="InterPro" id="IPR025911">
    <property type="entry name" value="ToxN/AbiQ_toxin"/>
</dbReference>
<dbReference type="InterPro" id="IPR053735">
    <property type="entry name" value="Type_III_TA_endoRNase"/>
</dbReference>
<dbReference type="Pfam" id="PF13958">
    <property type="entry name" value="ToxN_toxin"/>
    <property type="match status" value="1"/>
</dbReference>
<keyword id="KW-0002">3D-structure</keyword>
<keyword id="KW-0051">Antiviral defense</keyword>
<keyword id="KW-0255">Endonuclease</keyword>
<keyword id="KW-0378">Hydrolase</keyword>
<keyword id="KW-0540">Nuclease</keyword>
<keyword id="KW-0614">Plasmid</keyword>
<keyword id="KW-0694">RNA-binding</keyword>
<keyword id="KW-1277">Toxin-antitoxin system</keyword>
<keyword id="KW-0804">Transcription</keyword>
<keyword id="KW-0805">Transcription regulation</keyword>
<geneLocation type="plasmid">
    <name>pECA1039</name>
</geneLocation>
<evidence type="ECO:0000269" key="1">
    <source>
    </source>
</evidence>
<evidence type="ECO:0000269" key="2">
    <source>
    </source>
</evidence>
<evidence type="ECO:0000269" key="3">
    <source>
    </source>
</evidence>
<evidence type="ECO:0000269" key="4">
    <source>
    </source>
</evidence>
<evidence type="ECO:0000269" key="5">
    <source>
    </source>
</evidence>
<evidence type="ECO:0000303" key="6">
    <source>
    </source>
</evidence>
<evidence type="ECO:0000303" key="7">
    <source>
    </source>
</evidence>
<evidence type="ECO:0000305" key="8"/>
<evidence type="ECO:0007829" key="9">
    <source>
        <dbReference type="PDB" id="2XD0"/>
    </source>
</evidence>
<evidence type="ECO:0007829" key="10">
    <source>
        <dbReference type="PDB" id="2XDB"/>
    </source>
</evidence>